<protein>
    <recommendedName>
        <fullName>Protein BZZ1</fullName>
    </recommendedName>
    <alternativeName>
        <fullName>LAS17-binding protein 7</fullName>
    </alternativeName>
</protein>
<name>BZZ1_YEAST</name>
<proteinExistence type="evidence at protein level"/>
<organism>
    <name type="scientific">Saccharomyces cerevisiae (strain ATCC 204508 / S288c)</name>
    <name type="common">Baker's yeast</name>
    <dbReference type="NCBI Taxonomy" id="559292"/>
    <lineage>
        <taxon>Eukaryota</taxon>
        <taxon>Fungi</taxon>
        <taxon>Dikarya</taxon>
        <taxon>Ascomycota</taxon>
        <taxon>Saccharomycotina</taxon>
        <taxon>Saccharomycetes</taxon>
        <taxon>Saccharomycetales</taxon>
        <taxon>Saccharomycetaceae</taxon>
        <taxon>Saccharomyces</taxon>
    </lineage>
</organism>
<sequence>MSADLSIGNEIKDSFKETHKWVQNNLKWLKDIEQFYRERAKLEKDYSERLSRLSAEYFNKKSSTSVPISVGDTPTTTPGSIEAAGVVAWNEILSQTDMISKDHDQLSTDFENHVANQLSGLFTKLDMTLSKINGFNNDMVNKKDNIYHELEKAKKDYDEACSTMEMARNRYTKASNDRNKKKLDEKEMEMNKCKNEYLIKINQANRTKDKYYFQDVPEVLDLLQDVNEAKTLFLNDLWLKAASVENDLGANVSKRLQAANSVVKQNKPSLNTAIFIKHNLKNWKEPQDFVYKPSPVWHDDEKFAVPSSLEVEDLRIKLAKAENDYNSLQDKTQNELSKLSTLNKIKHEMKTNEDNINATKFYDTLKEYLNVVSPFTSHETLKLQAEVQIESIQNNVPEEYDLSTDNIDLSKTKKKSGIFSKFKHNILNVDSKPSSGGSTGNGNGGPLHITSLFNTSRRTRLGSAPNNAGEDSDNNSIRTTSTNNTKKTTQNSSDDGKNKVLYAYVQKDDDEITITPGDKISLVARDTGSGWTKINNDTTGETGLVPTTYIRISSAATVKANDRGPAPEVPPPRRSTLPVRTMEAIYAYEAQGDDEISIDPGDIITVIRGDDGSGWTYGECDGLKGLFPTSYCK</sequence>
<accession>P38822</accession>
<accession>D3DL64</accession>
<accession>E9P8V2</accession>
<gene>
    <name type="primary">BZZ1</name>
    <name type="synonym">LSB7</name>
    <name type="ordered locus">YHR114W</name>
</gene>
<feature type="chain" id="PRO_0000065033" description="Protein BZZ1">
    <location>
        <begin position="1"/>
        <end position="633"/>
    </location>
</feature>
<feature type="domain" description="F-BAR" evidence="3">
    <location>
        <begin position="5"/>
        <end position="271"/>
    </location>
</feature>
<feature type="domain" description="SH3 1" evidence="2">
    <location>
        <begin position="493"/>
        <end position="555"/>
    </location>
</feature>
<feature type="domain" description="SH3 2" evidence="2">
    <location>
        <begin position="577"/>
        <end position="633"/>
    </location>
</feature>
<feature type="region of interest" description="Disordered" evidence="4">
    <location>
        <begin position="429"/>
        <end position="495"/>
    </location>
</feature>
<feature type="coiled-coil region" evidence="1">
    <location>
        <begin position="138"/>
        <end position="210"/>
    </location>
</feature>
<feature type="compositionally biased region" description="Low complexity" evidence="4">
    <location>
        <begin position="474"/>
        <end position="493"/>
    </location>
</feature>
<feature type="modified residue" description="Phosphoserine" evidence="9">
    <location>
        <position position="327"/>
    </location>
</feature>
<feature type="modified residue" description="Phosphoserine" evidence="9 10">
    <location>
        <position position="463"/>
    </location>
</feature>
<feature type="modified residue" description="Phosphoserine" evidence="9 10">
    <location>
        <position position="472"/>
    </location>
</feature>
<feature type="modified residue" description="Phosphoserine" evidence="9 10">
    <location>
        <position position="476"/>
    </location>
</feature>
<feature type="sequence conflict" description="In Ref. 3; AAS56434." evidence="8" ref="3">
    <original>E</original>
    <variation>G</variation>
    <location>
        <position position="196"/>
    </location>
</feature>
<feature type="strand" evidence="11">
    <location>
        <begin position="520"/>
        <end position="524"/>
    </location>
</feature>
<feature type="strand" evidence="11">
    <location>
        <begin position="527"/>
        <end position="536"/>
    </location>
</feature>
<feature type="turn" evidence="11">
    <location>
        <begin position="537"/>
        <end position="540"/>
    </location>
</feature>
<feature type="strand" evidence="11">
    <location>
        <begin position="541"/>
        <end position="546"/>
    </location>
</feature>
<feature type="helix" evidence="11">
    <location>
        <begin position="547"/>
        <end position="549"/>
    </location>
</feature>
<feature type="strand" evidence="12">
    <location>
        <begin position="581"/>
        <end position="584"/>
    </location>
</feature>
<feature type="strand" evidence="12">
    <location>
        <begin position="603"/>
        <end position="608"/>
    </location>
</feature>
<feature type="strand" evidence="12">
    <location>
        <begin position="612"/>
        <end position="620"/>
    </location>
</feature>
<feature type="strand" evidence="12">
    <location>
        <begin position="623"/>
        <end position="628"/>
    </location>
</feature>
<feature type="helix" evidence="12">
    <location>
        <begin position="629"/>
        <end position="631"/>
    </location>
</feature>
<evidence type="ECO:0000255" key="1"/>
<evidence type="ECO:0000255" key="2">
    <source>
        <dbReference type="PROSITE-ProRule" id="PRU00192"/>
    </source>
</evidence>
<evidence type="ECO:0000255" key="3">
    <source>
        <dbReference type="PROSITE-ProRule" id="PRU01077"/>
    </source>
</evidence>
<evidence type="ECO:0000256" key="4">
    <source>
        <dbReference type="SAM" id="MobiDB-lite"/>
    </source>
</evidence>
<evidence type="ECO:0000269" key="5">
    <source>
    </source>
</evidence>
<evidence type="ECO:0000269" key="6">
    <source>
    </source>
</evidence>
<evidence type="ECO:0000269" key="7">
    <source>
    </source>
</evidence>
<evidence type="ECO:0000305" key="8"/>
<evidence type="ECO:0007744" key="9">
    <source>
    </source>
</evidence>
<evidence type="ECO:0007744" key="10">
    <source>
    </source>
</evidence>
<evidence type="ECO:0007829" key="11">
    <source>
        <dbReference type="PDB" id="1ZUU"/>
    </source>
</evidence>
<evidence type="ECO:0007829" key="12">
    <source>
        <dbReference type="PDB" id="2A28"/>
    </source>
</evidence>
<reference key="1">
    <citation type="journal article" date="1994" name="Science">
        <title>Complete nucleotide sequence of Saccharomyces cerevisiae chromosome VIII.</title>
        <authorList>
            <person name="Johnston M."/>
            <person name="Andrews S."/>
            <person name="Brinkman R."/>
            <person name="Cooper J."/>
            <person name="Ding H."/>
            <person name="Dover J."/>
            <person name="Du Z."/>
            <person name="Favello A."/>
            <person name="Fulton L."/>
            <person name="Gattung S."/>
            <person name="Geisel C."/>
            <person name="Kirsten J."/>
            <person name="Kucaba T."/>
            <person name="Hillier L.W."/>
            <person name="Jier M."/>
            <person name="Johnston L."/>
            <person name="Langston Y."/>
            <person name="Latreille P."/>
            <person name="Louis E.J."/>
            <person name="Macri C."/>
            <person name="Mardis E."/>
            <person name="Menezes S."/>
            <person name="Mouser L."/>
            <person name="Nhan M."/>
            <person name="Rifkin L."/>
            <person name="Riles L."/>
            <person name="St Peter H."/>
            <person name="Trevaskis E."/>
            <person name="Vaughan K."/>
            <person name="Vignati D."/>
            <person name="Wilcox L."/>
            <person name="Wohldman P."/>
            <person name="Waterston R."/>
            <person name="Wilson R."/>
            <person name="Vaudin M."/>
        </authorList>
    </citation>
    <scope>NUCLEOTIDE SEQUENCE [LARGE SCALE GENOMIC DNA]</scope>
    <source>
        <strain>ATCC 204508 / S288c</strain>
    </source>
</reference>
<reference key="2">
    <citation type="journal article" date="2014" name="G3 (Bethesda)">
        <title>The reference genome sequence of Saccharomyces cerevisiae: Then and now.</title>
        <authorList>
            <person name="Engel S.R."/>
            <person name="Dietrich F.S."/>
            <person name="Fisk D.G."/>
            <person name="Binkley G."/>
            <person name="Balakrishnan R."/>
            <person name="Costanzo M.C."/>
            <person name="Dwight S.S."/>
            <person name="Hitz B.C."/>
            <person name="Karra K."/>
            <person name="Nash R.S."/>
            <person name="Weng S."/>
            <person name="Wong E.D."/>
            <person name="Lloyd P."/>
            <person name="Skrzypek M.S."/>
            <person name="Miyasato S.R."/>
            <person name="Simison M."/>
            <person name="Cherry J.M."/>
        </authorList>
    </citation>
    <scope>GENOME REANNOTATION</scope>
    <source>
        <strain>ATCC 204508 / S288c</strain>
    </source>
</reference>
<reference key="3">
    <citation type="journal article" date="2007" name="Genome Res.">
        <title>Approaching a complete repository of sequence-verified protein-encoding clones for Saccharomyces cerevisiae.</title>
        <authorList>
            <person name="Hu Y."/>
            <person name="Rolfs A."/>
            <person name="Bhullar B."/>
            <person name="Murthy T.V.S."/>
            <person name="Zhu C."/>
            <person name="Berger M.F."/>
            <person name="Camargo A.A."/>
            <person name="Kelley F."/>
            <person name="McCarron S."/>
            <person name="Jepson D."/>
            <person name="Richardson A."/>
            <person name="Raphael J."/>
            <person name="Moreira D."/>
            <person name="Taycher E."/>
            <person name="Zuo D."/>
            <person name="Mohr S."/>
            <person name="Kane M.F."/>
            <person name="Williamson J."/>
            <person name="Simpson A.J.G."/>
            <person name="Bulyk M.L."/>
            <person name="Harlow E."/>
            <person name="Marsischky G."/>
            <person name="Kolodner R.D."/>
            <person name="LaBaer J."/>
        </authorList>
    </citation>
    <scope>NUCLEOTIDE SEQUENCE [GENOMIC DNA]</scope>
    <source>
        <strain>ATCC 204508 / S288c</strain>
    </source>
</reference>
<reference key="4">
    <citation type="journal article" date="2002" name="Mol. Cell. Biol.">
        <title>Saccharomyces cerevisiae Bzz1p is implicated with type I myosins in actin patch polarization and is able to recruit actin-polymerizing machinery in vitro.</title>
        <authorList>
            <person name="Soulard A."/>
            <person name="Lechler T."/>
            <person name="Spiridonov V."/>
            <person name="Shevchenko A."/>
            <person name="Shevchenko A."/>
            <person name="Li R."/>
            <person name="Winsor B."/>
        </authorList>
    </citation>
    <scope>FUNCTION</scope>
    <scope>SUBCELLULAR LOCATION</scope>
    <scope>INTERACTION WITH LAS17 AND MYO5</scope>
</reference>
<reference key="5">
    <citation type="journal article" date="2003" name="Nature">
        <title>Global analysis of protein expression in yeast.</title>
        <authorList>
            <person name="Ghaemmaghami S."/>
            <person name="Huh W.-K."/>
            <person name="Bower K."/>
            <person name="Howson R.W."/>
            <person name="Belle A."/>
            <person name="Dephoure N."/>
            <person name="O'Shea E.K."/>
            <person name="Weissman J.S."/>
        </authorList>
    </citation>
    <scope>LEVEL OF PROTEIN EXPRESSION [LARGE SCALE ANALYSIS]</scope>
</reference>
<reference key="6">
    <citation type="journal article" date="2005" name="Protoplasma">
        <title>The WASP/Las17p-interacting protein Bzz1p functions with Myo5p in an early stage of endocytosis.</title>
        <authorList>
            <person name="Soulard A."/>
            <person name="Friant S."/>
            <person name="Fitterer C."/>
            <person name="Orange C."/>
            <person name="Kaneva G."/>
            <person name="Mirey G."/>
            <person name="Winsor B."/>
        </authorList>
    </citation>
    <scope>FUNCTION</scope>
</reference>
<reference key="7">
    <citation type="journal article" date="2008" name="Mol. Cell. Proteomics">
        <title>A multidimensional chromatography technology for in-depth phosphoproteome analysis.</title>
        <authorList>
            <person name="Albuquerque C.P."/>
            <person name="Smolka M.B."/>
            <person name="Payne S.H."/>
            <person name="Bafna V."/>
            <person name="Eng J."/>
            <person name="Zhou H."/>
        </authorList>
    </citation>
    <scope>PHOSPHORYLATION [LARGE SCALE ANALYSIS] AT SER-327; SER-463; SER-472 AND SER-476</scope>
    <scope>IDENTIFICATION BY MASS SPECTROMETRY [LARGE SCALE ANALYSIS]</scope>
</reference>
<reference key="8">
    <citation type="journal article" date="2009" name="Science">
        <title>Global analysis of Cdk1 substrate phosphorylation sites provides insights into evolution.</title>
        <authorList>
            <person name="Holt L.J."/>
            <person name="Tuch B.B."/>
            <person name="Villen J."/>
            <person name="Johnson A.D."/>
            <person name="Gygi S.P."/>
            <person name="Morgan D.O."/>
        </authorList>
    </citation>
    <scope>PHOSPHORYLATION [LARGE SCALE ANALYSIS] AT SER-463; SER-472 AND SER-476</scope>
    <scope>IDENTIFICATION BY MASS SPECTROMETRY [LARGE SCALE ANALYSIS]</scope>
</reference>
<reference key="9">
    <citation type="submission" date="2005-06" db="PDB data bank">
        <title>Structural genomics of yeast SH3 domains.</title>
        <authorList>
            <person name="Kursula P."/>
            <person name="Kursula I."/>
            <person name="Lehmann F."/>
            <person name="Zou P."/>
            <person name="Song Y.H."/>
            <person name="Wilmanns M."/>
        </authorList>
    </citation>
    <scope>X-RAY CRYSTALLOGRAPHY (0.97 ANGSTROMS) OF 498-633</scope>
</reference>
<keyword id="KW-0002">3D-structure</keyword>
<keyword id="KW-0175">Coiled coil</keyword>
<keyword id="KW-0963">Cytoplasm</keyword>
<keyword id="KW-0206">Cytoskeleton</keyword>
<keyword id="KW-0254">Endocytosis</keyword>
<keyword id="KW-0597">Phosphoprotein</keyword>
<keyword id="KW-1185">Reference proteome</keyword>
<keyword id="KW-0677">Repeat</keyword>
<keyword id="KW-0728">SH3 domain</keyword>
<dbReference type="EMBL" id="U00059">
    <property type="protein sequence ID" value="AAB68850.1"/>
    <property type="molecule type" value="Genomic_DNA"/>
</dbReference>
<dbReference type="EMBL" id="AY558108">
    <property type="protein sequence ID" value="AAS56434.1"/>
    <property type="molecule type" value="Genomic_DNA"/>
</dbReference>
<dbReference type="EMBL" id="BK006934">
    <property type="protein sequence ID" value="DAA06808.1"/>
    <property type="molecule type" value="Genomic_DNA"/>
</dbReference>
<dbReference type="PIR" id="S48956">
    <property type="entry name" value="S48956"/>
</dbReference>
<dbReference type="RefSeq" id="NP_011982.1">
    <property type="nucleotide sequence ID" value="NM_001179244.1"/>
</dbReference>
<dbReference type="PDB" id="1ZUU">
    <property type="method" value="X-ray"/>
    <property type="resolution" value="0.97 A"/>
    <property type="chains" value="A=498-552"/>
</dbReference>
<dbReference type="PDB" id="2A28">
    <property type="method" value="X-ray"/>
    <property type="resolution" value="1.07 A"/>
    <property type="chains" value="A/B/C/D=582-633"/>
</dbReference>
<dbReference type="PDBsum" id="1ZUU"/>
<dbReference type="PDBsum" id="2A28"/>
<dbReference type="SMR" id="P38822"/>
<dbReference type="BioGRID" id="36547">
    <property type="interactions" value="210"/>
</dbReference>
<dbReference type="DIP" id="DIP-2143N"/>
<dbReference type="FunCoup" id="P38822">
    <property type="interactions" value="462"/>
</dbReference>
<dbReference type="IntAct" id="P38822">
    <property type="interactions" value="86"/>
</dbReference>
<dbReference type="MINT" id="P38822"/>
<dbReference type="STRING" id="4932.YHR114W"/>
<dbReference type="MoonDB" id="P38822">
    <property type="type" value="Predicted"/>
</dbReference>
<dbReference type="iPTMnet" id="P38822"/>
<dbReference type="PaxDb" id="4932-YHR114W"/>
<dbReference type="PeptideAtlas" id="P38822"/>
<dbReference type="EnsemblFungi" id="YHR114W_mRNA">
    <property type="protein sequence ID" value="YHR114W"/>
    <property type="gene ID" value="YHR114W"/>
</dbReference>
<dbReference type="GeneID" id="856514"/>
<dbReference type="KEGG" id="sce:YHR114W"/>
<dbReference type="AGR" id="SGD:S000001156"/>
<dbReference type="SGD" id="S000001156">
    <property type="gene designation" value="BZZ1"/>
</dbReference>
<dbReference type="VEuPathDB" id="FungiDB:YHR114W"/>
<dbReference type="eggNOG" id="KOG3565">
    <property type="taxonomic scope" value="Eukaryota"/>
</dbReference>
<dbReference type="GeneTree" id="ENSGT00950000183047"/>
<dbReference type="HOGENOM" id="CLU_015390_1_0_1"/>
<dbReference type="InParanoid" id="P38822"/>
<dbReference type="OMA" id="YADGWWE"/>
<dbReference type="OrthoDB" id="8783038at2759"/>
<dbReference type="BioCyc" id="YEAST:G3O-31156-MONOMER"/>
<dbReference type="Reactome" id="R-SCE-9013406">
    <property type="pathway name" value="RHOQ GTPase cycle"/>
</dbReference>
<dbReference type="Reactome" id="R-SCE-9696270">
    <property type="pathway name" value="RND2 GTPase cycle"/>
</dbReference>
<dbReference type="BioGRID-ORCS" id="856514">
    <property type="hits" value="0 hits in 10 CRISPR screens"/>
</dbReference>
<dbReference type="EvolutionaryTrace" id="P38822"/>
<dbReference type="PRO" id="PR:P38822"/>
<dbReference type="Proteomes" id="UP000002311">
    <property type="component" value="Chromosome VIII"/>
</dbReference>
<dbReference type="RNAct" id="P38822">
    <property type="molecule type" value="protein"/>
</dbReference>
<dbReference type="GO" id="GO:0030479">
    <property type="term" value="C:actin cortical patch"/>
    <property type="evidence" value="ECO:0000314"/>
    <property type="project" value="SGD"/>
</dbReference>
<dbReference type="GO" id="GO:0005935">
    <property type="term" value="C:cellular bud neck"/>
    <property type="evidence" value="ECO:0007005"/>
    <property type="project" value="SGD"/>
</dbReference>
<dbReference type="GO" id="GO:0005737">
    <property type="term" value="C:cytoplasm"/>
    <property type="evidence" value="ECO:0007005"/>
    <property type="project" value="SGD"/>
</dbReference>
<dbReference type="GO" id="GO:0043332">
    <property type="term" value="C:mating projection tip"/>
    <property type="evidence" value="ECO:0007005"/>
    <property type="project" value="SGD"/>
</dbReference>
<dbReference type="GO" id="GO:0005886">
    <property type="term" value="C:plasma membrane"/>
    <property type="evidence" value="ECO:0000314"/>
    <property type="project" value="SGD"/>
</dbReference>
<dbReference type="GO" id="GO:0008047">
    <property type="term" value="F:enzyme activator activity"/>
    <property type="evidence" value="ECO:0000315"/>
    <property type="project" value="SGD"/>
</dbReference>
<dbReference type="GO" id="GO:0005543">
    <property type="term" value="F:phospholipid binding"/>
    <property type="evidence" value="ECO:0000314"/>
    <property type="project" value="SGD"/>
</dbReference>
<dbReference type="GO" id="GO:0007015">
    <property type="term" value="P:actin filament organization"/>
    <property type="evidence" value="ECO:0000353"/>
    <property type="project" value="SGD"/>
</dbReference>
<dbReference type="GO" id="GO:0045010">
    <property type="term" value="P:actin nucleation"/>
    <property type="evidence" value="ECO:0000315"/>
    <property type="project" value="SGD"/>
</dbReference>
<dbReference type="GO" id="GO:0006897">
    <property type="term" value="P:endocytosis"/>
    <property type="evidence" value="ECO:0000316"/>
    <property type="project" value="SGD"/>
</dbReference>
<dbReference type="GO" id="GO:0030833">
    <property type="term" value="P:regulation of actin filament polymerization"/>
    <property type="evidence" value="ECO:0000318"/>
    <property type="project" value="GO_Central"/>
</dbReference>
<dbReference type="GO" id="GO:0009651">
    <property type="term" value="P:response to salt stress"/>
    <property type="evidence" value="ECO:0000316"/>
    <property type="project" value="SGD"/>
</dbReference>
<dbReference type="CDD" id="cd11778">
    <property type="entry name" value="SH3_Bzz1_2"/>
    <property type="match status" value="1"/>
</dbReference>
<dbReference type="CDD" id="cd11777">
    <property type="entry name" value="SH3_CIP4_Bzz1_like"/>
    <property type="match status" value="1"/>
</dbReference>
<dbReference type="FunFam" id="1.20.1270.60:FF:000060">
    <property type="entry name" value="Actin polymerization protein Bzz1"/>
    <property type="match status" value="1"/>
</dbReference>
<dbReference type="FunFam" id="2.30.30.40:FF:000271">
    <property type="entry name" value="Protein BZZ1"/>
    <property type="match status" value="1"/>
</dbReference>
<dbReference type="Gene3D" id="1.20.1270.60">
    <property type="entry name" value="Arfaptin homology (AH) domain/BAR domain"/>
    <property type="match status" value="1"/>
</dbReference>
<dbReference type="Gene3D" id="2.30.30.40">
    <property type="entry name" value="SH3 Domains"/>
    <property type="match status" value="2"/>
</dbReference>
<dbReference type="InterPro" id="IPR027267">
    <property type="entry name" value="AH/BAR_dom_sf"/>
</dbReference>
<dbReference type="InterPro" id="IPR031160">
    <property type="entry name" value="F_BAR"/>
</dbReference>
<dbReference type="InterPro" id="IPR001060">
    <property type="entry name" value="FCH_dom"/>
</dbReference>
<dbReference type="InterPro" id="IPR036028">
    <property type="entry name" value="SH3-like_dom_sf"/>
</dbReference>
<dbReference type="InterPro" id="IPR001452">
    <property type="entry name" value="SH3_domain"/>
</dbReference>
<dbReference type="PANTHER" id="PTHR15735">
    <property type="entry name" value="FCH AND DOUBLE SH3 DOMAINS PROTEIN"/>
    <property type="match status" value="1"/>
</dbReference>
<dbReference type="PANTHER" id="PTHR15735:SF21">
    <property type="entry name" value="PROTEIN NERVOUS WRECK"/>
    <property type="match status" value="1"/>
</dbReference>
<dbReference type="Pfam" id="PF00611">
    <property type="entry name" value="FCH"/>
    <property type="match status" value="1"/>
</dbReference>
<dbReference type="Pfam" id="PF00018">
    <property type="entry name" value="SH3_1"/>
    <property type="match status" value="1"/>
</dbReference>
<dbReference type="Pfam" id="PF14604">
    <property type="entry name" value="SH3_9"/>
    <property type="match status" value="1"/>
</dbReference>
<dbReference type="SMART" id="SM00055">
    <property type="entry name" value="FCH"/>
    <property type="match status" value="1"/>
</dbReference>
<dbReference type="SMART" id="SM00326">
    <property type="entry name" value="SH3"/>
    <property type="match status" value="2"/>
</dbReference>
<dbReference type="SUPFAM" id="SSF103657">
    <property type="entry name" value="BAR/IMD domain-like"/>
    <property type="match status" value="1"/>
</dbReference>
<dbReference type="SUPFAM" id="SSF50044">
    <property type="entry name" value="SH3-domain"/>
    <property type="match status" value="2"/>
</dbReference>
<dbReference type="PROSITE" id="PS51741">
    <property type="entry name" value="F_BAR"/>
    <property type="match status" value="1"/>
</dbReference>
<dbReference type="PROSITE" id="PS50002">
    <property type="entry name" value="SH3"/>
    <property type="match status" value="2"/>
</dbReference>
<comment type="function">
    <text evidence="5 7">Plays a role in endocytosis and trafficking to the vacuole. Functions with type I myosins to restore polarity of the actin cytoskeleton after NaCl stress.</text>
</comment>
<comment type="subunit">
    <text evidence="5">Interacts with LAS17 and MYO5.</text>
</comment>
<comment type="interaction">
    <interactant intactId="EBI-3889">
        <id>P38822</id>
    </interactant>
    <interactant intactId="EBI-25376">
        <id>P40563</id>
        <label>AIM21</label>
    </interactant>
    <organismsDiffer>false</organismsDiffer>
    <experiments>7</experiments>
</comment>
<comment type="interaction">
    <interactant intactId="EBI-3889">
        <id>P38822</id>
    </interactant>
    <interactant intactId="EBI-21584">
        <id>P38266</id>
        <label>AIM3</label>
    </interactant>
    <organismsDiffer>false</organismsDiffer>
    <experiments>2</experiments>
</comment>
<comment type="interaction">
    <interactant intactId="EBI-3889">
        <id>P38822</id>
    </interactant>
    <interactant intactId="EBI-28798">
        <id>P53933</id>
        <label>APP1</label>
    </interactant>
    <organismsDiffer>false</organismsDiffer>
    <experiments>14</experiments>
</comment>
<comment type="interaction">
    <interactant intactId="EBI-3889">
        <id>P38822</id>
    </interactant>
    <interactant intactId="EBI-3437">
        <id>P47068</id>
        <label>BBC1</label>
    </interactant>
    <organismsDiffer>false</organismsDiffer>
    <experiments>2</experiments>
</comment>
<comment type="interaction">
    <interactant intactId="EBI-3889">
        <id>P38822</id>
    </interactant>
    <interactant intactId="EBI-10022">
        <id>Q12446</id>
        <label>LAS17</label>
    </interactant>
    <organismsDiffer>false</organismsDiffer>
    <experiments>17</experiments>
</comment>
<comment type="interaction">
    <interactant intactId="EBI-3889">
        <id>P38822</id>
    </interactant>
    <interactant intactId="EBI-38872">
        <id>Q12342</id>
        <label>LDB17</label>
    </interactant>
    <organismsDiffer>false</organismsDiffer>
    <experiments>4</experiments>
</comment>
<comment type="interaction">
    <interactant intactId="EBI-3889">
        <id>P38822</id>
    </interactant>
    <interactant intactId="EBI-11687">
        <id>Q04439</id>
        <label>MYO5</label>
    </interactant>
    <organismsDiffer>false</organismsDiffer>
    <experiments>5</experiments>
</comment>
<comment type="interaction">
    <interactant intactId="EBI-3889">
        <id>P38822</id>
    </interactant>
    <interactant intactId="EBI-19857">
        <id>P40453</id>
        <label>UBP7</label>
    </interactant>
    <organismsDiffer>false</organismsDiffer>
    <experiments>3</experiments>
</comment>
<comment type="interaction">
    <interactant intactId="EBI-3889">
        <id>P38822</id>
    </interactant>
    <interactant intactId="EBI-38031">
        <id>Q08989</id>
        <label>YPL277C</label>
    </interactant>
    <organismsDiffer>false</organismsDiffer>
    <experiments>2</experiments>
</comment>
<comment type="subcellular location">
    <subcellularLocation>
        <location evidence="5">Cytoplasm</location>
        <location evidence="5">Cytoskeleton</location>
        <location evidence="5">Actin patch</location>
    </subcellularLocation>
    <text>localizes in cortical actin patches in a LAS17-dependent manner.</text>
</comment>
<comment type="miscellaneous">
    <text evidence="6">Present with 5440 molecules/cell in log phase SD medium.</text>
</comment>
<comment type="similarity">
    <text evidence="8">Belongs to the BZZ1 family.</text>
</comment>